<gene>
    <name evidence="1" type="primary">recO</name>
    <name type="ordered locus">VF_2085</name>
</gene>
<dbReference type="EMBL" id="CP000020">
    <property type="protein sequence ID" value="AAW86580.1"/>
    <property type="molecule type" value="Genomic_DNA"/>
</dbReference>
<dbReference type="RefSeq" id="WP_005420710.1">
    <property type="nucleotide sequence ID" value="NZ_CAWLES010000001.1"/>
</dbReference>
<dbReference type="RefSeq" id="YP_205468.1">
    <property type="nucleotide sequence ID" value="NC_006840.2"/>
</dbReference>
<dbReference type="SMR" id="Q5E316"/>
<dbReference type="STRING" id="312309.VF_2085"/>
<dbReference type="EnsemblBacteria" id="AAW86580">
    <property type="protein sequence ID" value="AAW86580"/>
    <property type="gene ID" value="VF_2085"/>
</dbReference>
<dbReference type="GeneID" id="54164790"/>
<dbReference type="KEGG" id="vfi:VF_2085"/>
<dbReference type="PATRIC" id="fig|312309.11.peg.2127"/>
<dbReference type="eggNOG" id="COG1381">
    <property type="taxonomic scope" value="Bacteria"/>
</dbReference>
<dbReference type="HOGENOM" id="CLU_066645_1_0_6"/>
<dbReference type="OrthoDB" id="9804792at2"/>
<dbReference type="Proteomes" id="UP000000537">
    <property type="component" value="Chromosome I"/>
</dbReference>
<dbReference type="GO" id="GO:0043590">
    <property type="term" value="C:bacterial nucleoid"/>
    <property type="evidence" value="ECO:0007669"/>
    <property type="project" value="TreeGrafter"/>
</dbReference>
<dbReference type="GO" id="GO:0006310">
    <property type="term" value="P:DNA recombination"/>
    <property type="evidence" value="ECO:0007669"/>
    <property type="project" value="UniProtKB-UniRule"/>
</dbReference>
<dbReference type="GO" id="GO:0006302">
    <property type="term" value="P:double-strand break repair"/>
    <property type="evidence" value="ECO:0007669"/>
    <property type="project" value="TreeGrafter"/>
</dbReference>
<dbReference type="Gene3D" id="2.40.50.140">
    <property type="entry name" value="Nucleic acid-binding proteins"/>
    <property type="match status" value="1"/>
</dbReference>
<dbReference type="Gene3D" id="1.20.1440.120">
    <property type="entry name" value="Recombination protein O, C-terminal domain"/>
    <property type="match status" value="1"/>
</dbReference>
<dbReference type="HAMAP" id="MF_00201">
    <property type="entry name" value="RecO"/>
    <property type="match status" value="1"/>
</dbReference>
<dbReference type="InterPro" id="IPR037278">
    <property type="entry name" value="ARFGAP/RecO"/>
</dbReference>
<dbReference type="InterPro" id="IPR022572">
    <property type="entry name" value="DNA_rep/recomb_RecO_N"/>
</dbReference>
<dbReference type="InterPro" id="IPR012340">
    <property type="entry name" value="NA-bd_OB-fold"/>
</dbReference>
<dbReference type="InterPro" id="IPR003717">
    <property type="entry name" value="RecO"/>
</dbReference>
<dbReference type="InterPro" id="IPR042242">
    <property type="entry name" value="RecO_C"/>
</dbReference>
<dbReference type="NCBIfam" id="TIGR00613">
    <property type="entry name" value="reco"/>
    <property type="match status" value="1"/>
</dbReference>
<dbReference type="PANTHER" id="PTHR33991">
    <property type="entry name" value="DNA REPAIR PROTEIN RECO"/>
    <property type="match status" value="1"/>
</dbReference>
<dbReference type="PANTHER" id="PTHR33991:SF1">
    <property type="entry name" value="DNA REPAIR PROTEIN RECO"/>
    <property type="match status" value="1"/>
</dbReference>
<dbReference type="Pfam" id="PF02565">
    <property type="entry name" value="RecO_C"/>
    <property type="match status" value="1"/>
</dbReference>
<dbReference type="Pfam" id="PF11967">
    <property type="entry name" value="RecO_N"/>
    <property type="match status" value="1"/>
</dbReference>
<dbReference type="SUPFAM" id="SSF57863">
    <property type="entry name" value="ArfGap/RecO-like zinc finger"/>
    <property type="match status" value="1"/>
</dbReference>
<dbReference type="SUPFAM" id="SSF50249">
    <property type="entry name" value="Nucleic acid-binding proteins"/>
    <property type="match status" value="1"/>
</dbReference>
<sequence>MEEGLQRCFVLHRRPYSESSLILDVFSEEYGRLSIISKGARSKRSNLKGVLQAFTPLLMKWSGKGSMRTLRQAETISLGIPLTGINLYSAMYINELLVRVVEQETPYPALFLDYLTALTELAQSTNPEPALRRFELALLSAMGYGVDFLHCAGSGEMVSPEMTYRYREQQGFMASIRHDPLMSFKGNELIAISERRFTTPEQLKAAKRFTRIALKPYLGGKPLKSRELFLPRTRSILK</sequence>
<comment type="function">
    <text evidence="1">Involved in DNA repair and RecF pathway recombination.</text>
</comment>
<comment type="similarity">
    <text evidence="1">Belongs to the RecO family.</text>
</comment>
<organism>
    <name type="scientific">Aliivibrio fischeri (strain ATCC 700601 / ES114)</name>
    <name type="common">Vibrio fischeri</name>
    <dbReference type="NCBI Taxonomy" id="312309"/>
    <lineage>
        <taxon>Bacteria</taxon>
        <taxon>Pseudomonadati</taxon>
        <taxon>Pseudomonadota</taxon>
        <taxon>Gammaproteobacteria</taxon>
        <taxon>Vibrionales</taxon>
        <taxon>Vibrionaceae</taxon>
        <taxon>Aliivibrio</taxon>
    </lineage>
</organism>
<protein>
    <recommendedName>
        <fullName evidence="1">DNA repair protein RecO</fullName>
    </recommendedName>
    <alternativeName>
        <fullName evidence="1">Recombination protein O</fullName>
    </alternativeName>
</protein>
<accession>Q5E316</accession>
<feature type="chain" id="PRO_0000205022" description="DNA repair protein RecO">
    <location>
        <begin position="1"/>
        <end position="238"/>
    </location>
</feature>
<proteinExistence type="inferred from homology"/>
<name>RECO_ALIF1</name>
<keyword id="KW-0227">DNA damage</keyword>
<keyword id="KW-0233">DNA recombination</keyword>
<keyword id="KW-0234">DNA repair</keyword>
<keyword id="KW-1185">Reference proteome</keyword>
<evidence type="ECO:0000255" key="1">
    <source>
        <dbReference type="HAMAP-Rule" id="MF_00201"/>
    </source>
</evidence>
<reference key="1">
    <citation type="journal article" date="2005" name="Proc. Natl. Acad. Sci. U.S.A.">
        <title>Complete genome sequence of Vibrio fischeri: a symbiotic bacterium with pathogenic congeners.</title>
        <authorList>
            <person name="Ruby E.G."/>
            <person name="Urbanowski M."/>
            <person name="Campbell J."/>
            <person name="Dunn A."/>
            <person name="Faini M."/>
            <person name="Gunsalus R."/>
            <person name="Lostroh P."/>
            <person name="Lupp C."/>
            <person name="McCann J."/>
            <person name="Millikan D."/>
            <person name="Schaefer A."/>
            <person name="Stabb E."/>
            <person name="Stevens A."/>
            <person name="Visick K."/>
            <person name="Whistler C."/>
            <person name="Greenberg E.P."/>
        </authorList>
    </citation>
    <scope>NUCLEOTIDE SEQUENCE [LARGE SCALE GENOMIC DNA]</scope>
    <source>
        <strain>ATCC 700601 / ES114</strain>
    </source>
</reference>